<comment type="similarity">
    <text evidence="1">Belongs to the UPF0434 family.</text>
</comment>
<proteinExistence type="inferred from homology"/>
<keyword id="KW-1185">Reference proteome</keyword>
<accession>Q8EDF2</accession>
<dbReference type="EMBL" id="AE014299">
    <property type="protein sequence ID" value="AAN55822.1"/>
    <property type="molecule type" value="Genomic_DNA"/>
</dbReference>
<dbReference type="RefSeq" id="NP_718378.1">
    <property type="nucleotide sequence ID" value="NC_004347.2"/>
</dbReference>
<dbReference type="RefSeq" id="WP_011072733.1">
    <property type="nucleotide sequence ID" value="NC_004347.2"/>
</dbReference>
<dbReference type="SMR" id="Q8EDF2"/>
<dbReference type="STRING" id="211586.SO_2800"/>
<dbReference type="PaxDb" id="211586-SO_2800"/>
<dbReference type="DNASU" id="1170500"/>
<dbReference type="KEGG" id="son:SO_2800"/>
<dbReference type="PATRIC" id="fig|211586.12.peg.2701"/>
<dbReference type="eggNOG" id="COG2835">
    <property type="taxonomic scope" value="Bacteria"/>
</dbReference>
<dbReference type="HOGENOM" id="CLU_155659_3_1_6"/>
<dbReference type="OrthoDB" id="9812205at2"/>
<dbReference type="PhylomeDB" id="Q8EDF2"/>
<dbReference type="BioCyc" id="SONE211586:G1GMP-2586-MONOMER"/>
<dbReference type="Proteomes" id="UP000008186">
    <property type="component" value="Chromosome"/>
</dbReference>
<dbReference type="GO" id="GO:0005829">
    <property type="term" value="C:cytosol"/>
    <property type="evidence" value="ECO:0000318"/>
    <property type="project" value="GO_Central"/>
</dbReference>
<dbReference type="FunFam" id="2.20.25.10:FF:000002">
    <property type="entry name" value="UPF0434 protein YcaR"/>
    <property type="match status" value="1"/>
</dbReference>
<dbReference type="Gene3D" id="2.20.25.10">
    <property type="match status" value="1"/>
</dbReference>
<dbReference type="HAMAP" id="MF_01187">
    <property type="entry name" value="UPF0434"/>
    <property type="match status" value="1"/>
</dbReference>
<dbReference type="InterPro" id="IPR005651">
    <property type="entry name" value="Trm112-like"/>
</dbReference>
<dbReference type="PANTHER" id="PTHR33505:SF4">
    <property type="entry name" value="PROTEIN PREY, MITOCHONDRIAL"/>
    <property type="match status" value="1"/>
</dbReference>
<dbReference type="PANTHER" id="PTHR33505">
    <property type="entry name" value="ZGC:162634"/>
    <property type="match status" value="1"/>
</dbReference>
<dbReference type="Pfam" id="PF03966">
    <property type="entry name" value="Trm112p"/>
    <property type="match status" value="1"/>
</dbReference>
<dbReference type="SUPFAM" id="SSF158997">
    <property type="entry name" value="Trm112p-like"/>
    <property type="match status" value="1"/>
</dbReference>
<reference key="1">
    <citation type="journal article" date="2002" name="Nat. Biotechnol.">
        <title>Genome sequence of the dissimilatory metal ion-reducing bacterium Shewanella oneidensis.</title>
        <authorList>
            <person name="Heidelberg J.F."/>
            <person name="Paulsen I.T."/>
            <person name="Nelson K.E."/>
            <person name="Gaidos E.J."/>
            <person name="Nelson W.C."/>
            <person name="Read T.D."/>
            <person name="Eisen J.A."/>
            <person name="Seshadri R."/>
            <person name="Ward N.L."/>
            <person name="Methe B.A."/>
            <person name="Clayton R.A."/>
            <person name="Meyer T."/>
            <person name="Tsapin A."/>
            <person name="Scott J."/>
            <person name="Beanan M.J."/>
            <person name="Brinkac L.M."/>
            <person name="Daugherty S.C."/>
            <person name="DeBoy R.T."/>
            <person name="Dodson R.J."/>
            <person name="Durkin A.S."/>
            <person name="Haft D.H."/>
            <person name="Kolonay J.F."/>
            <person name="Madupu R."/>
            <person name="Peterson J.D."/>
            <person name="Umayam L.A."/>
            <person name="White O."/>
            <person name="Wolf A.M."/>
            <person name="Vamathevan J.J."/>
            <person name="Weidman J.F."/>
            <person name="Impraim M."/>
            <person name="Lee K."/>
            <person name="Berry K.J."/>
            <person name="Lee C."/>
            <person name="Mueller J."/>
            <person name="Khouri H.M."/>
            <person name="Gill J."/>
            <person name="Utterback T.R."/>
            <person name="McDonald L.A."/>
            <person name="Feldblyum T.V."/>
            <person name="Smith H.O."/>
            <person name="Venter J.C."/>
            <person name="Nealson K.H."/>
            <person name="Fraser C.M."/>
        </authorList>
    </citation>
    <scope>NUCLEOTIDE SEQUENCE [LARGE SCALE GENOMIC DNA]</scope>
    <source>
        <strain>ATCC 700550 / JCM 31522 / CIP 106686 / LMG 19005 / NCIMB 14063 / MR-1</strain>
    </source>
</reference>
<feature type="chain" id="PRO_0000291166" description="UPF0434 protein SO_2800">
    <location>
        <begin position="1"/>
        <end position="59"/>
    </location>
</feature>
<name>Y2800_SHEON</name>
<protein>
    <recommendedName>
        <fullName evidence="1">UPF0434 protein SO_2800</fullName>
    </recommendedName>
</protein>
<organism>
    <name type="scientific">Shewanella oneidensis (strain ATCC 700550 / JCM 31522 / CIP 106686 / LMG 19005 / NCIMB 14063 / MR-1)</name>
    <dbReference type="NCBI Taxonomy" id="211586"/>
    <lineage>
        <taxon>Bacteria</taxon>
        <taxon>Pseudomonadati</taxon>
        <taxon>Pseudomonadota</taxon>
        <taxon>Gammaproteobacteria</taxon>
        <taxon>Alteromonadales</taxon>
        <taxon>Shewanellaceae</taxon>
        <taxon>Shewanella</taxon>
    </lineage>
</organism>
<sequence length="59" mass="6504">MAFDKKLLDIVACPVCKGKLEYDKVAQQLICKADKLAYPITDGIPVLLENRALPLTESV</sequence>
<gene>
    <name type="ordered locus">SO_2800</name>
</gene>
<evidence type="ECO:0000255" key="1">
    <source>
        <dbReference type="HAMAP-Rule" id="MF_01187"/>
    </source>
</evidence>